<protein>
    <recommendedName>
        <fullName evidence="1">Exodeoxyribonuclease 7 small subunit</fullName>
        <ecNumber evidence="1">3.1.11.6</ecNumber>
    </recommendedName>
    <alternativeName>
        <fullName evidence="1">Exodeoxyribonuclease VII small subunit</fullName>
        <shortName evidence="1">Exonuclease VII small subunit</shortName>
    </alternativeName>
</protein>
<evidence type="ECO:0000255" key="1">
    <source>
        <dbReference type="HAMAP-Rule" id="MF_00337"/>
    </source>
</evidence>
<organism>
    <name type="scientific">Streptococcus pyogenes serotype M1</name>
    <dbReference type="NCBI Taxonomy" id="301447"/>
    <lineage>
        <taxon>Bacteria</taxon>
        <taxon>Bacillati</taxon>
        <taxon>Bacillota</taxon>
        <taxon>Bacilli</taxon>
        <taxon>Lactobacillales</taxon>
        <taxon>Streptococcaceae</taxon>
        <taxon>Streptococcus</taxon>
    </lineage>
</organism>
<keyword id="KW-0963">Cytoplasm</keyword>
<keyword id="KW-0269">Exonuclease</keyword>
<keyword id="KW-0378">Hydrolase</keyword>
<keyword id="KW-0540">Nuclease</keyword>
<keyword id="KW-1185">Reference proteome</keyword>
<accession>P67467</accession>
<accession>Q48XS5</accession>
<accession>Q99YX4</accession>
<reference key="1">
    <citation type="journal article" date="2001" name="Proc. Natl. Acad. Sci. U.S.A.">
        <title>Complete genome sequence of an M1 strain of Streptococcus pyogenes.</title>
        <authorList>
            <person name="Ferretti J.J."/>
            <person name="McShan W.M."/>
            <person name="Ajdic D.J."/>
            <person name="Savic D.J."/>
            <person name="Savic G."/>
            <person name="Lyon K."/>
            <person name="Primeaux C."/>
            <person name="Sezate S."/>
            <person name="Suvorov A.N."/>
            <person name="Kenton S."/>
            <person name="Lai H.S."/>
            <person name="Lin S.P."/>
            <person name="Qian Y."/>
            <person name="Jia H.G."/>
            <person name="Najar F.Z."/>
            <person name="Ren Q."/>
            <person name="Zhu H."/>
            <person name="Song L."/>
            <person name="White J."/>
            <person name="Yuan X."/>
            <person name="Clifton S.W."/>
            <person name="Roe B.A."/>
            <person name="McLaughlin R.E."/>
        </authorList>
    </citation>
    <scope>NUCLEOTIDE SEQUENCE [LARGE SCALE GENOMIC DNA]</scope>
    <source>
        <strain>ATCC 700294 / SF370 / Serotype M1</strain>
    </source>
</reference>
<reference key="2">
    <citation type="journal article" date="2005" name="J. Infect. Dis.">
        <title>Evolutionary origin and emergence of a highly successful clone of serotype M1 group A Streptococcus involved multiple horizontal gene transfer events.</title>
        <authorList>
            <person name="Sumby P."/>
            <person name="Porcella S.F."/>
            <person name="Madrigal A.G."/>
            <person name="Barbian K.D."/>
            <person name="Virtaneva K."/>
            <person name="Ricklefs S.M."/>
            <person name="Sturdevant D.E."/>
            <person name="Graham M.R."/>
            <person name="Vuopio-Varkila J."/>
            <person name="Hoe N.P."/>
            <person name="Musser J.M."/>
        </authorList>
    </citation>
    <scope>NUCLEOTIDE SEQUENCE [LARGE SCALE GENOMIC DNA]</scope>
    <source>
        <strain>ATCC BAA-947 / MGAS5005 / Serotype M1</strain>
    </source>
</reference>
<feature type="chain" id="PRO_0000207018" description="Exodeoxyribonuclease 7 small subunit">
    <location>
        <begin position="1"/>
        <end position="71"/>
    </location>
</feature>
<proteinExistence type="inferred from homology"/>
<gene>
    <name evidence="1" type="primary">xseB</name>
    <name type="ordered locus">SPy_1499</name>
    <name type="ordered locus">M5005_Spy1232</name>
</gene>
<comment type="function">
    <text evidence="1">Bidirectionally degrades single-stranded DNA into large acid-insoluble oligonucleotides, which are then degraded further into small acid-soluble oligonucleotides.</text>
</comment>
<comment type="catalytic activity">
    <reaction evidence="1">
        <text>Exonucleolytic cleavage in either 5'- to 3'- or 3'- to 5'-direction to yield nucleoside 5'-phosphates.</text>
        <dbReference type="EC" id="3.1.11.6"/>
    </reaction>
</comment>
<comment type="subunit">
    <text evidence="1">Heterooligomer composed of large and small subunits.</text>
</comment>
<comment type="subcellular location">
    <subcellularLocation>
        <location evidence="1">Cytoplasm</location>
    </subcellularLocation>
</comment>
<comment type="similarity">
    <text evidence="1">Belongs to the XseB family.</text>
</comment>
<sequence length="71" mass="7988">MSKTKTFEENLQDLETIVNKLENGDVPLEEAISEFQKGMLLSKELQKTLQAAEKTLVKVMQADGTEVDMDD</sequence>
<dbReference type="EC" id="3.1.11.6" evidence="1"/>
<dbReference type="EMBL" id="AE004092">
    <property type="protein sequence ID" value="AAK34298.1"/>
    <property type="molecule type" value="Genomic_DNA"/>
</dbReference>
<dbReference type="EMBL" id="CP000017">
    <property type="protein sequence ID" value="AAZ51850.1"/>
    <property type="molecule type" value="Genomic_DNA"/>
</dbReference>
<dbReference type="RefSeq" id="NP_269577.1">
    <property type="nucleotide sequence ID" value="NC_002737.2"/>
</dbReference>
<dbReference type="SMR" id="P67467"/>
<dbReference type="PaxDb" id="1314-HKU360_01274"/>
<dbReference type="KEGG" id="spy:SPy_1499"/>
<dbReference type="KEGG" id="spz:M5005_Spy1232"/>
<dbReference type="PATRIC" id="fig|160490.10.peg.1309"/>
<dbReference type="HOGENOM" id="CLU_145918_3_2_9"/>
<dbReference type="OMA" id="PLNDYKG"/>
<dbReference type="Proteomes" id="UP000000750">
    <property type="component" value="Chromosome"/>
</dbReference>
<dbReference type="GO" id="GO:0005829">
    <property type="term" value="C:cytosol"/>
    <property type="evidence" value="ECO:0007669"/>
    <property type="project" value="TreeGrafter"/>
</dbReference>
<dbReference type="GO" id="GO:0009318">
    <property type="term" value="C:exodeoxyribonuclease VII complex"/>
    <property type="evidence" value="ECO:0007669"/>
    <property type="project" value="InterPro"/>
</dbReference>
<dbReference type="GO" id="GO:0008855">
    <property type="term" value="F:exodeoxyribonuclease VII activity"/>
    <property type="evidence" value="ECO:0007669"/>
    <property type="project" value="UniProtKB-UniRule"/>
</dbReference>
<dbReference type="GO" id="GO:0006308">
    <property type="term" value="P:DNA catabolic process"/>
    <property type="evidence" value="ECO:0007669"/>
    <property type="project" value="UniProtKB-UniRule"/>
</dbReference>
<dbReference type="Gene3D" id="1.10.287.1040">
    <property type="entry name" value="Exonuclease VII, small subunit"/>
    <property type="match status" value="1"/>
</dbReference>
<dbReference type="HAMAP" id="MF_00337">
    <property type="entry name" value="Exonuc_7_S"/>
    <property type="match status" value="1"/>
</dbReference>
<dbReference type="InterPro" id="IPR003761">
    <property type="entry name" value="Exonuc_VII_S"/>
</dbReference>
<dbReference type="InterPro" id="IPR037004">
    <property type="entry name" value="Exonuc_VII_ssu_sf"/>
</dbReference>
<dbReference type="NCBIfam" id="NF002138">
    <property type="entry name" value="PRK00977.1-2"/>
    <property type="match status" value="1"/>
</dbReference>
<dbReference type="NCBIfam" id="TIGR01280">
    <property type="entry name" value="xseB"/>
    <property type="match status" value="1"/>
</dbReference>
<dbReference type="PANTHER" id="PTHR34137">
    <property type="entry name" value="EXODEOXYRIBONUCLEASE 7 SMALL SUBUNIT"/>
    <property type="match status" value="1"/>
</dbReference>
<dbReference type="PANTHER" id="PTHR34137:SF1">
    <property type="entry name" value="EXODEOXYRIBONUCLEASE 7 SMALL SUBUNIT"/>
    <property type="match status" value="1"/>
</dbReference>
<dbReference type="Pfam" id="PF02609">
    <property type="entry name" value="Exonuc_VII_S"/>
    <property type="match status" value="1"/>
</dbReference>
<dbReference type="PIRSF" id="PIRSF006488">
    <property type="entry name" value="Exonuc_VII_S"/>
    <property type="match status" value="1"/>
</dbReference>
<dbReference type="SUPFAM" id="SSF116842">
    <property type="entry name" value="XseB-like"/>
    <property type="match status" value="1"/>
</dbReference>
<name>EX7S_STRP1</name>